<comment type="function">
    <text evidence="1">Cell wall formation.</text>
</comment>
<comment type="catalytic activity">
    <reaction evidence="1">
        <text>UDP-N-acetyl-alpha-D-muramate + L-alanine + ATP = UDP-N-acetyl-alpha-D-muramoyl-L-alanine + ADP + phosphate + H(+)</text>
        <dbReference type="Rhea" id="RHEA:23372"/>
        <dbReference type="ChEBI" id="CHEBI:15378"/>
        <dbReference type="ChEBI" id="CHEBI:30616"/>
        <dbReference type="ChEBI" id="CHEBI:43474"/>
        <dbReference type="ChEBI" id="CHEBI:57972"/>
        <dbReference type="ChEBI" id="CHEBI:70757"/>
        <dbReference type="ChEBI" id="CHEBI:83898"/>
        <dbReference type="ChEBI" id="CHEBI:456216"/>
        <dbReference type="EC" id="6.3.2.8"/>
    </reaction>
</comment>
<comment type="pathway">
    <text evidence="1">Cell wall biogenesis; peptidoglycan biosynthesis.</text>
</comment>
<comment type="subcellular location">
    <subcellularLocation>
        <location evidence="1">Cytoplasm</location>
    </subcellularLocation>
</comment>
<comment type="similarity">
    <text evidence="1">Belongs to the MurCDEF family.</text>
</comment>
<gene>
    <name evidence="1" type="primary">murC</name>
    <name type="ordered locus">BURPS1710b_3543</name>
</gene>
<keyword id="KW-0067">ATP-binding</keyword>
<keyword id="KW-0131">Cell cycle</keyword>
<keyword id="KW-0132">Cell division</keyword>
<keyword id="KW-0133">Cell shape</keyword>
<keyword id="KW-0961">Cell wall biogenesis/degradation</keyword>
<keyword id="KW-0963">Cytoplasm</keyword>
<keyword id="KW-0436">Ligase</keyword>
<keyword id="KW-0547">Nucleotide-binding</keyword>
<keyword id="KW-0573">Peptidoglycan synthesis</keyword>
<feature type="chain" id="PRO_0000242547" description="UDP-N-acetylmuramate--L-alanine ligase">
    <location>
        <begin position="1"/>
        <end position="465"/>
    </location>
</feature>
<feature type="binding site" evidence="1">
    <location>
        <begin position="112"/>
        <end position="118"/>
    </location>
    <ligand>
        <name>ATP</name>
        <dbReference type="ChEBI" id="CHEBI:30616"/>
    </ligand>
</feature>
<evidence type="ECO:0000255" key="1">
    <source>
        <dbReference type="HAMAP-Rule" id="MF_00046"/>
    </source>
</evidence>
<protein>
    <recommendedName>
        <fullName evidence="1">UDP-N-acetylmuramate--L-alanine ligase</fullName>
        <ecNumber evidence="1">6.3.2.8</ecNumber>
    </recommendedName>
    <alternativeName>
        <fullName evidence="1">UDP-N-acetylmuramoyl-L-alanine synthetase</fullName>
    </alternativeName>
</protein>
<dbReference type="EC" id="6.3.2.8" evidence="1"/>
<dbReference type="EMBL" id="CP000124">
    <property type="protein sequence ID" value="ABA47506.1"/>
    <property type="molecule type" value="Genomic_DNA"/>
</dbReference>
<dbReference type="RefSeq" id="WP_004522018.1">
    <property type="nucleotide sequence ID" value="NC_007434.1"/>
</dbReference>
<dbReference type="SMR" id="Q3JND9"/>
<dbReference type="EnsemblBacteria" id="ABA47506">
    <property type="protein sequence ID" value="ABA47506"/>
    <property type="gene ID" value="BURPS1710b_3543"/>
</dbReference>
<dbReference type="GeneID" id="93061626"/>
<dbReference type="KEGG" id="bpm:BURPS1710b_3543"/>
<dbReference type="HOGENOM" id="CLU_028104_2_2_4"/>
<dbReference type="UniPathway" id="UPA00219"/>
<dbReference type="Proteomes" id="UP000002700">
    <property type="component" value="Chromosome I"/>
</dbReference>
<dbReference type="GO" id="GO:0005737">
    <property type="term" value="C:cytoplasm"/>
    <property type="evidence" value="ECO:0007669"/>
    <property type="project" value="UniProtKB-SubCell"/>
</dbReference>
<dbReference type="GO" id="GO:0005524">
    <property type="term" value="F:ATP binding"/>
    <property type="evidence" value="ECO:0007669"/>
    <property type="project" value="UniProtKB-UniRule"/>
</dbReference>
<dbReference type="GO" id="GO:0008763">
    <property type="term" value="F:UDP-N-acetylmuramate-L-alanine ligase activity"/>
    <property type="evidence" value="ECO:0007669"/>
    <property type="project" value="UniProtKB-UniRule"/>
</dbReference>
<dbReference type="GO" id="GO:0051301">
    <property type="term" value="P:cell division"/>
    <property type="evidence" value="ECO:0007669"/>
    <property type="project" value="UniProtKB-KW"/>
</dbReference>
<dbReference type="GO" id="GO:0071555">
    <property type="term" value="P:cell wall organization"/>
    <property type="evidence" value="ECO:0007669"/>
    <property type="project" value="UniProtKB-KW"/>
</dbReference>
<dbReference type="GO" id="GO:0009252">
    <property type="term" value="P:peptidoglycan biosynthetic process"/>
    <property type="evidence" value="ECO:0007669"/>
    <property type="project" value="UniProtKB-UniRule"/>
</dbReference>
<dbReference type="GO" id="GO:0008360">
    <property type="term" value="P:regulation of cell shape"/>
    <property type="evidence" value="ECO:0007669"/>
    <property type="project" value="UniProtKB-KW"/>
</dbReference>
<dbReference type="FunFam" id="3.40.1190.10:FF:000001">
    <property type="entry name" value="UDP-N-acetylmuramate--L-alanine ligase"/>
    <property type="match status" value="1"/>
</dbReference>
<dbReference type="Gene3D" id="3.90.190.20">
    <property type="entry name" value="Mur ligase, C-terminal domain"/>
    <property type="match status" value="1"/>
</dbReference>
<dbReference type="Gene3D" id="3.40.1190.10">
    <property type="entry name" value="Mur-like, catalytic domain"/>
    <property type="match status" value="1"/>
</dbReference>
<dbReference type="Gene3D" id="3.40.50.720">
    <property type="entry name" value="NAD(P)-binding Rossmann-like Domain"/>
    <property type="match status" value="1"/>
</dbReference>
<dbReference type="HAMAP" id="MF_00046">
    <property type="entry name" value="MurC"/>
    <property type="match status" value="1"/>
</dbReference>
<dbReference type="InterPro" id="IPR036565">
    <property type="entry name" value="Mur-like_cat_sf"/>
</dbReference>
<dbReference type="InterPro" id="IPR004101">
    <property type="entry name" value="Mur_ligase_C"/>
</dbReference>
<dbReference type="InterPro" id="IPR036615">
    <property type="entry name" value="Mur_ligase_C_dom_sf"/>
</dbReference>
<dbReference type="InterPro" id="IPR013221">
    <property type="entry name" value="Mur_ligase_cen"/>
</dbReference>
<dbReference type="InterPro" id="IPR000713">
    <property type="entry name" value="Mur_ligase_N"/>
</dbReference>
<dbReference type="InterPro" id="IPR050061">
    <property type="entry name" value="MurCDEF_pg_biosynth"/>
</dbReference>
<dbReference type="InterPro" id="IPR005758">
    <property type="entry name" value="UDP-N-AcMur_Ala_ligase_MurC"/>
</dbReference>
<dbReference type="NCBIfam" id="TIGR01082">
    <property type="entry name" value="murC"/>
    <property type="match status" value="1"/>
</dbReference>
<dbReference type="PANTHER" id="PTHR43445:SF3">
    <property type="entry name" value="UDP-N-ACETYLMURAMATE--L-ALANINE LIGASE"/>
    <property type="match status" value="1"/>
</dbReference>
<dbReference type="PANTHER" id="PTHR43445">
    <property type="entry name" value="UDP-N-ACETYLMURAMATE--L-ALANINE LIGASE-RELATED"/>
    <property type="match status" value="1"/>
</dbReference>
<dbReference type="Pfam" id="PF01225">
    <property type="entry name" value="Mur_ligase"/>
    <property type="match status" value="1"/>
</dbReference>
<dbReference type="Pfam" id="PF02875">
    <property type="entry name" value="Mur_ligase_C"/>
    <property type="match status" value="1"/>
</dbReference>
<dbReference type="Pfam" id="PF08245">
    <property type="entry name" value="Mur_ligase_M"/>
    <property type="match status" value="1"/>
</dbReference>
<dbReference type="SUPFAM" id="SSF51984">
    <property type="entry name" value="MurCD N-terminal domain"/>
    <property type="match status" value="1"/>
</dbReference>
<dbReference type="SUPFAM" id="SSF53623">
    <property type="entry name" value="MurD-like peptide ligases, catalytic domain"/>
    <property type="match status" value="1"/>
</dbReference>
<dbReference type="SUPFAM" id="SSF53244">
    <property type="entry name" value="MurD-like peptide ligases, peptide-binding domain"/>
    <property type="match status" value="1"/>
</dbReference>
<proteinExistence type="inferred from homology"/>
<name>MURC_BURP1</name>
<sequence length="465" mass="49026">MKHIVKHIHFVGIGGAGMSGIAEVLVNLGYQVSGSDLARNAVTERLEALGARVSIGHDAANIEGANAVVVSTAVRSDNPEVLAARRLRVPIVPRAVMLAELMRLKQGIAIAGTHGKTTTTSLVASVLAAGGLDPTFVIGGRLTSAGANARLGTGDFIVAEADESDASFLNLYPVIEVITNIDADHMDTYGHDFARLKQAFIEFTQRLPFYGSAVVCIDDANVRQIVPLISKPVVRYGFAADAQVRAENVEARDGRMHFTVRREGREPLPVVLNLPGLHNVQNALAAIAIATDLDVADAAIQQALAEFNGVGRRFQRYGEIAAAGGGAYTLIDDYGHHPVEMAATIAAARGAFPGRRLVLAFQPHRYTRTRDCFDDFVNVLSTVDALVLTEVYAAGEAPISTANGDALSRALRAAGKVEPVFVATVDEVPDALAKLARDGDVVITMGAGSIGGVPGKLAQDTQQKG</sequence>
<reference key="1">
    <citation type="journal article" date="2010" name="Genome Biol. Evol.">
        <title>Continuing evolution of Burkholderia mallei through genome reduction and large-scale rearrangements.</title>
        <authorList>
            <person name="Losada L."/>
            <person name="Ronning C.M."/>
            <person name="DeShazer D."/>
            <person name="Woods D."/>
            <person name="Fedorova N."/>
            <person name="Kim H.S."/>
            <person name="Shabalina S.A."/>
            <person name="Pearson T.R."/>
            <person name="Brinkac L."/>
            <person name="Tan P."/>
            <person name="Nandi T."/>
            <person name="Crabtree J."/>
            <person name="Badger J."/>
            <person name="Beckstrom-Sternberg S."/>
            <person name="Saqib M."/>
            <person name="Schutzer S.E."/>
            <person name="Keim P."/>
            <person name="Nierman W.C."/>
        </authorList>
    </citation>
    <scope>NUCLEOTIDE SEQUENCE [LARGE SCALE GENOMIC DNA]</scope>
    <source>
        <strain>1710b</strain>
    </source>
</reference>
<organism>
    <name type="scientific">Burkholderia pseudomallei (strain 1710b)</name>
    <dbReference type="NCBI Taxonomy" id="320372"/>
    <lineage>
        <taxon>Bacteria</taxon>
        <taxon>Pseudomonadati</taxon>
        <taxon>Pseudomonadota</taxon>
        <taxon>Betaproteobacteria</taxon>
        <taxon>Burkholderiales</taxon>
        <taxon>Burkholderiaceae</taxon>
        <taxon>Burkholderia</taxon>
        <taxon>pseudomallei group</taxon>
    </lineage>
</organism>
<accession>Q3JND9</accession>